<feature type="chain" id="PRO_1000020172" description="Methionyl-tRNA formyltransferase">
    <location>
        <begin position="1"/>
        <end position="311"/>
    </location>
</feature>
<feature type="binding site" evidence="1">
    <location>
        <begin position="109"/>
        <end position="112"/>
    </location>
    <ligand>
        <name>(6S)-5,6,7,8-tetrahydrofolate</name>
        <dbReference type="ChEBI" id="CHEBI:57453"/>
    </ligand>
</feature>
<reference key="1">
    <citation type="journal article" date="2006" name="Lancet">
        <title>Complete genome sequence of USA300, an epidemic clone of community-acquired meticillin-resistant Staphylococcus aureus.</title>
        <authorList>
            <person name="Diep B.A."/>
            <person name="Gill S.R."/>
            <person name="Chang R.F."/>
            <person name="Phan T.H."/>
            <person name="Chen J.H."/>
            <person name="Davidson M.G."/>
            <person name="Lin F."/>
            <person name="Lin J."/>
            <person name="Carleton H.A."/>
            <person name="Mongodin E.F."/>
            <person name="Sensabaugh G.F."/>
            <person name="Perdreau-Remington F."/>
        </authorList>
    </citation>
    <scope>NUCLEOTIDE SEQUENCE [LARGE SCALE GENOMIC DNA]</scope>
    <source>
        <strain>USA300</strain>
    </source>
</reference>
<name>FMT_STAA3</name>
<dbReference type="EC" id="2.1.2.9" evidence="1"/>
<dbReference type="EMBL" id="CP000255">
    <property type="protein sequence ID" value="ABD21974.1"/>
    <property type="molecule type" value="Genomic_DNA"/>
</dbReference>
<dbReference type="RefSeq" id="WP_000161299.1">
    <property type="nucleotide sequence ID" value="NZ_CP027476.1"/>
</dbReference>
<dbReference type="SMR" id="Q2FHM2"/>
<dbReference type="KEGG" id="saa:SAUSA300_1109"/>
<dbReference type="HOGENOM" id="CLU_033347_1_1_9"/>
<dbReference type="OMA" id="GITTMLM"/>
<dbReference type="Proteomes" id="UP000001939">
    <property type="component" value="Chromosome"/>
</dbReference>
<dbReference type="GO" id="GO:0005829">
    <property type="term" value="C:cytosol"/>
    <property type="evidence" value="ECO:0007669"/>
    <property type="project" value="TreeGrafter"/>
</dbReference>
<dbReference type="GO" id="GO:0004479">
    <property type="term" value="F:methionyl-tRNA formyltransferase activity"/>
    <property type="evidence" value="ECO:0007669"/>
    <property type="project" value="UniProtKB-UniRule"/>
</dbReference>
<dbReference type="CDD" id="cd08646">
    <property type="entry name" value="FMT_core_Met-tRNA-FMT_N"/>
    <property type="match status" value="1"/>
</dbReference>
<dbReference type="CDD" id="cd08704">
    <property type="entry name" value="Met_tRNA_FMT_C"/>
    <property type="match status" value="1"/>
</dbReference>
<dbReference type="FunFam" id="3.40.50.170:FF:000004">
    <property type="entry name" value="Methionyl-tRNA formyltransferase"/>
    <property type="match status" value="1"/>
</dbReference>
<dbReference type="Gene3D" id="3.10.25.10">
    <property type="entry name" value="Formyl transferase, C-terminal domain"/>
    <property type="match status" value="1"/>
</dbReference>
<dbReference type="Gene3D" id="3.40.50.170">
    <property type="entry name" value="Formyl transferase, N-terminal domain"/>
    <property type="match status" value="1"/>
</dbReference>
<dbReference type="HAMAP" id="MF_00182">
    <property type="entry name" value="Formyl_trans"/>
    <property type="match status" value="1"/>
</dbReference>
<dbReference type="InterPro" id="IPR005794">
    <property type="entry name" value="Fmt"/>
</dbReference>
<dbReference type="InterPro" id="IPR005793">
    <property type="entry name" value="Formyl_trans_C"/>
</dbReference>
<dbReference type="InterPro" id="IPR037022">
    <property type="entry name" value="Formyl_trans_C_sf"/>
</dbReference>
<dbReference type="InterPro" id="IPR002376">
    <property type="entry name" value="Formyl_transf_N"/>
</dbReference>
<dbReference type="InterPro" id="IPR036477">
    <property type="entry name" value="Formyl_transf_N_sf"/>
</dbReference>
<dbReference type="InterPro" id="IPR011034">
    <property type="entry name" value="Formyl_transferase-like_C_sf"/>
</dbReference>
<dbReference type="InterPro" id="IPR001555">
    <property type="entry name" value="GART_AS"/>
</dbReference>
<dbReference type="InterPro" id="IPR044135">
    <property type="entry name" value="Met-tRNA-FMT_C"/>
</dbReference>
<dbReference type="InterPro" id="IPR041711">
    <property type="entry name" value="Met-tRNA-FMT_N"/>
</dbReference>
<dbReference type="NCBIfam" id="TIGR00460">
    <property type="entry name" value="fmt"/>
    <property type="match status" value="1"/>
</dbReference>
<dbReference type="PANTHER" id="PTHR11138">
    <property type="entry name" value="METHIONYL-TRNA FORMYLTRANSFERASE"/>
    <property type="match status" value="1"/>
</dbReference>
<dbReference type="PANTHER" id="PTHR11138:SF5">
    <property type="entry name" value="METHIONYL-TRNA FORMYLTRANSFERASE, MITOCHONDRIAL"/>
    <property type="match status" value="1"/>
</dbReference>
<dbReference type="Pfam" id="PF02911">
    <property type="entry name" value="Formyl_trans_C"/>
    <property type="match status" value="1"/>
</dbReference>
<dbReference type="Pfam" id="PF00551">
    <property type="entry name" value="Formyl_trans_N"/>
    <property type="match status" value="1"/>
</dbReference>
<dbReference type="SUPFAM" id="SSF50486">
    <property type="entry name" value="FMT C-terminal domain-like"/>
    <property type="match status" value="1"/>
</dbReference>
<dbReference type="SUPFAM" id="SSF53328">
    <property type="entry name" value="Formyltransferase"/>
    <property type="match status" value="1"/>
</dbReference>
<dbReference type="PROSITE" id="PS00373">
    <property type="entry name" value="GART"/>
    <property type="match status" value="1"/>
</dbReference>
<proteinExistence type="inferred from homology"/>
<protein>
    <recommendedName>
        <fullName evidence="1">Methionyl-tRNA formyltransferase</fullName>
        <ecNumber evidence="1">2.1.2.9</ecNumber>
    </recommendedName>
</protein>
<sequence>MTKIIFMGTPDFSTTVLEMLIAEHDVIAVVTQPDRPVGRKRVMTPPPVKKVAMKYDLPVYQPEKLSGSEELEQLLQLDVDLIVTAAFGQLLPESLLALPNLGAINVHASLLPKYRGGAPIHQAIIDGEQETGITIMYMVKKLDAGNIISQQAIKIEENDNVGTMHDKLSVLGADLLKETLPSIIEGTNESVPQDDTQATFASNIRREDERISWNKPGRQVFNQIRGLSPWPVAYTTMDDTNLKIYDAELVETNKINEPGTIIETTKKAIIVATNDNEAVAIKDMQLAGKKRMLAANYLSGAQNTLVGKKLI</sequence>
<accession>Q2FHM2</accession>
<evidence type="ECO:0000255" key="1">
    <source>
        <dbReference type="HAMAP-Rule" id="MF_00182"/>
    </source>
</evidence>
<keyword id="KW-0648">Protein biosynthesis</keyword>
<keyword id="KW-0808">Transferase</keyword>
<organism>
    <name type="scientific">Staphylococcus aureus (strain USA300)</name>
    <dbReference type="NCBI Taxonomy" id="367830"/>
    <lineage>
        <taxon>Bacteria</taxon>
        <taxon>Bacillati</taxon>
        <taxon>Bacillota</taxon>
        <taxon>Bacilli</taxon>
        <taxon>Bacillales</taxon>
        <taxon>Staphylococcaceae</taxon>
        <taxon>Staphylococcus</taxon>
    </lineage>
</organism>
<gene>
    <name evidence="1" type="primary">fmt</name>
    <name type="ordered locus">SAUSA300_1109</name>
</gene>
<comment type="function">
    <text evidence="1">Attaches a formyl group to the free amino group of methionyl-tRNA(fMet). The formyl group appears to play a dual role in the initiator identity of N-formylmethionyl-tRNA by promoting its recognition by IF2 and preventing the misappropriation of this tRNA by the elongation apparatus.</text>
</comment>
<comment type="catalytic activity">
    <reaction evidence="1">
        <text>L-methionyl-tRNA(fMet) + (6R)-10-formyltetrahydrofolate = N-formyl-L-methionyl-tRNA(fMet) + (6S)-5,6,7,8-tetrahydrofolate + H(+)</text>
        <dbReference type="Rhea" id="RHEA:24380"/>
        <dbReference type="Rhea" id="RHEA-COMP:9952"/>
        <dbReference type="Rhea" id="RHEA-COMP:9953"/>
        <dbReference type="ChEBI" id="CHEBI:15378"/>
        <dbReference type="ChEBI" id="CHEBI:57453"/>
        <dbReference type="ChEBI" id="CHEBI:78530"/>
        <dbReference type="ChEBI" id="CHEBI:78844"/>
        <dbReference type="ChEBI" id="CHEBI:195366"/>
        <dbReference type="EC" id="2.1.2.9"/>
    </reaction>
</comment>
<comment type="similarity">
    <text evidence="1">Belongs to the Fmt family.</text>
</comment>